<organism>
    <name type="scientific">Rattus norvegicus</name>
    <name type="common">Rat</name>
    <dbReference type="NCBI Taxonomy" id="10116"/>
    <lineage>
        <taxon>Eukaryota</taxon>
        <taxon>Metazoa</taxon>
        <taxon>Chordata</taxon>
        <taxon>Craniata</taxon>
        <taxon>Vertebrata</taxon>
        <taxon>Euteleostomi</taxon>
        <taxon>Mammalia</taxon>
        <taxon>Eutheria</taxon>
        <taxon>Euarchontoglires</taxon>
        <taxon>Glires</taxon>
        <taxon>Rodentia</taxon>
        <taxon>Myomorpha</taxon>
        <taxon>Muroidea</taxon>
        <taxon>Muridae</taxon>
        <taxon>Murinae</taxon>
        <taxon>Rattus</taxon>
    </lineage>
</organism>
<dbReference type="EMBL" id="U81160">
    <property type="protein sequence ID" value="AAB53041.1"/>
    <property type="molecule type" value="mRNA"/>
</dbReference>
<dbReference type="EMBL" id="BC081705">
    <property type="protein sequence ID" value="AAH81705.1"/>
    <property type="molecule type" value="mRNA"/>
</dbReference>
<dbReference type="RefSeq" id="NP_742069.1">
    <property type="nucleotide sequence ID" value="NM_172072.2"/>
</dbReference>
<dbReference type="SMR" id="O08700"/>
<dbReference type="BioGRID" id="249101">
    <property type="interactions" value="2"/>
</dbReference>
<dbReference type="FunCoup" id="O08700">
    <property type="interactions" value="4318"/>
</dbReference>
<dbReference type="IntAct" id="O08700">
    <property type="interactions" value="3"/>
</dbReference>
<dbReference type="MINT" id="O08700"/>
<dbReference type="STRING" id="10116.ENSRNOP00000028751"/>
<dbReference type="iPTMnet" id="O08700"/>
<dbReference type="PhosphoSitePlus" id="O08700"/>
<dbReference type="jPOST" id="O08700"/>
<dbReference type="PaxDb" id="10116-ENSRNOP00000028751"/>
<dbReference type="Ensembl" id="ENSRNOT00000028751.6">
    <property type="protein sequence ID" value="ENSRNOP00000028751.3"/>
    <property type="gene ID" value="ENSRNOG00000021173.6"/>
</dbReference>
<dbReference type="GeneID" id="64516"/>
<dbReference type="KEGG" id="rno:64516"/>
<dbReference type="UCSC" id="RGD:621267">
    <property type="organism name" value="rat"/>
</dbReference>
<dbReference type="AGR" id="RGD:621267"/>
<dbReference type="CTD" id="11311"/>
<dbReference type="RGD" id="621267">
    <property type="gene designation" value="Vps45"/>
</dbReference>
<dbReference type="eggNOG" id="KOG1299">
    <property type="taxonomic scope" value="Eukaryota"/>
</dbReference>
<dbReference type="GeneTree" id="ENSGT00550000075028"/>
<dbReference type="HOGENOM" id="CLU_013933_3_1_1"/>
<dbReference type="InParanoid" id="O08700"/>
<dbReference type="OMA" id="VHQLNNA"/>
<dbReference type="OrthoDB" id="10266265at2759"/>
<dbReference type="PhylomeDB" id="O08700"/>
<dbReference type="TreeFam" id="TF300407"/>
<dbReference type="Reactome" id="R-RNO-6811438">
    <property type="pathway name" value="Intra-Golgi traffic"/>
</dbReference>
<dbReference type="Reactome" id="R-RNO-983231">
    <property type="pathway name" value="Factors involved in megakaryocyte development and platelet production"/>
</dbReference>
<dbReference type="PRO" id="PR:O08700"/>
<dbReference type="Proteomes" id="UP000002494">
    <property type="component" value="Chromosome 2"/>
</dbReference>
<dbReference type="Bgee" id="ENSRNOG00000021173">
    <property type="expression patterns" value="Expressed in cerebellum and 20 other cell types or tissues"/>
</dbReference>
<dbReference type="GO" id="GO:0010008">
    <property type="term" value="C:endosome membrane"/>
    <property type="evidence" value="ECO:0000266"/>
    <property type="project" value="RGD"/>
</dbReference>
<dbReference type="GO" id="GO:0005794">
    <property type="term" value="C:Golgi apparatus"/>
    <property type="evidence" value="ECO:0000314"/>
    <property type="project" value="BHF-UCL"/>
</dbReference>
<dbReference type="GO" id="GO:0000139">
    <property type="term" value="C:Golgi membrane"/>
    <property type="evidence" value="ECO:0000266"/>
    <property type="project" value="RGD"/>
</dbReference>
<dbReference type="GO" id="GO:0016020">
    <property type="term" value="C:membrane"/>
    <property type="evidence" value="ECO:0000314"/>
    <property type="project" value="BHF-UCL"/>
</dbReference>
<dbReference type="GO" id="GO:0008021">
    <property type="term" value="C:synaptic vesicle"/>
    <property type="evidence" value="ECO:0000314"/>
    <property type="project" value="SynGO"/>
</dbReference>
<dbReference type="GO" id="GO:0006886">
    <property type="term" value="P:intracellular protein transport"/>
    <property type="evidence" value="ECO:0000318"/>
    <property type="project" value="GO_Central"/>
</dbReference>
<dbReference type="GO" id="GO:0016192">
    <property type="term" value="P:vesicle-mediated transport"/>
    <property type="evidence" value="ECO:0000318"/>
    <property type="project" value="GO_Central"/>
</dbReference>
<dbReference type="FunFam" id="1.25.40.60:FF:000003">
    <property type="entry name" value="Vacuolar protein sorting-associated protein 45"/>
    <property type="match status" value="1"/>
</dbReference>
<dbReference type="FunFam" id="3.90.830.10:FF:000002">
    <property type="entry name" value="Vacuolar protein sorting-associated protein 45"/>
    <property type="match status" value="1"/>
</dbReference>
<dbReference type="FunFam" id="3.40.50.2060:FF:000003">
    <property type="entry name" value="vacuolar protein sorting-associated protein 45 isoform X1"/>
    <property type="match status" value="1"/>
</dbReference>
<dbReference type="Gene3D" id="1.25.40.60">
    <property type="match status" value="1"/>
</dbReference>
<dbReference type="Gene3D" id="3.40.50.1910">
    <property type="match status" value="1"/>
</dbReference>
<dbReference type="Gene3D" id="3.40.50.2060">
    <property type="match status" value="1"/>
</dbReference>
<dbReference type="Gene3D" id="3.90.830.10">
    <property type="entry name" value="Syntaxin Binding Protein 1, Chain A, domain 2"/>
    <property type="match status" value="1"/>
</dbReference>
<dbReference type="InterPro" id="IPR043154">
    <property type="entry name" value="Sec-1-like_dom1"/>
</dbReference>
<dbReference type="InterPro" id="IPR043127">
    <property type="entry name" value="Sec-1-like_dom3a"/>
</dbReference>
<dbReference type="InterPro" id="IPR001619">
    <property type="entry name" value="Sec1-like"/>
</dbReference>
<dbReference type="InterPro" id="IPR027482">
    <property type="entry name" value="Sec1-like_dom2"/>
</dbReference>
<dbReference type="InterPro" id="IPR036045">
    <property type="entry name" value="Sec1-like_sf"/>
</dbReference>
<dbReference type="PANTHER" id="PTHR11679">
    <property type="entry name" value="VESICLE PROTEIN SORTING-ASSOCIATED"/>
    <property type="match status" value="1"/>
</dbReference>
<dbReference type="Pfam" id="PF00995">
    <property type="entry name" value="Sec1"/>
    <property type="match status" value="1"/>
</dbReference>
<dbReference type="PIRSF" id="PIRSF005715">
    <property type="entry name" value="VPS45_Sec1"/>
    <property type="match status" value="1"/>
</dbReference>
<dbReference type="SUPFAM" id="SSF56815">
    <property type="entry name" value="Sec1/munc18-like (SM) proteins"/>
    <property type="match status" value="1"/>
</dbReference>
<keyword id="KW-0967">Endosome</keyword>
<keyword id="KW-0333">Golgi apparatus</keyword>
<keyword id="KW-0472">Membrane</keyword>
<keyword id="KW-0597">Phosphoprotein</keyword>
<keyword id="KW-0653">Protein transport</keyword>
<keyword id="KW-1185">Reference proteome</keyword>
<keyword id="KW-0813">Transport</keyword>
<gene>
    <name type="primary">Vps45</name>
    <name type="synonym">Vps45a</name>
</gene>
<comment type="function">
    <text>May play a role in vesicle-mediated protein trafficking from the Golgi stack through the trans-Golgi network.</text>
</comment>
<comment type="subunit">
    <text evidence="1">Interacts with STX6 and ZFYVE20.</text>
</comment>
<comment type="interaction">
    <interactant intactId="EBI-7849203">
        <id>O08700</id>
    </interactant>
    <interactant intactId="EBI-3871057">
        <id>Q8BVI5</id>
        <label>Stx16</label>
    </interactant>
    <organismsDiffer>true</organismsDiffer>
    <experiments>6</experiments>
</comment>
<comment type="subcellular location">
    <subcellularLocation>
        <location evidence="1">Golgi apparatus membrane</location>
        <topology evidence="1">Peripheral membrane protein</topology>
    </subcellularLocation>
    <subcellularLocation>
        <location evidence="1">Endosome membrane</location>
        <topology evidence="1">Peripheral membrane protein</topology>
    </subcellularLocation>
    <text evidence="1">Associated with Golgi/endosomal vesicles and the trans-Golgi network.</text>
</comment>
<comment type="tissue specificity">
    <text>Ubiquitous; expression was highest in testis and in brain. Detected in every part of the brain.</text>
</comment>
<comment type="similarity">
    <text evidence="3">Belongs to the STXBP/unc-18/SEC1 family.</text>
</comment>
<proteinExistence type="evidence at protein level"/>
<sequence>MNVVFAVKQYISKMIEDSGPGMKVLLMDKETTGIVSMVYTQSEILQKEVYLFERIDSQNREIMKHLKAICFLRPTKENVDSLIQELRRPKYSIYFIYFSNVISKSDVKSLAEADEQEVVAEVQEFYGDYIAVNPHLFSLNILGCCQGRNWDPAQLSRTTQGLTALLLSLKKCPMIRYQLSSEAAKRLGECVKQVISKEYELFEFRRTEVPPLLLILDRCDDAITPLLNQWTYQAMVHELLGINNNRIDLSRVPGISKDLREVVLSAENDEFYANNMYLNFAEIGSNIKNLMEDFQKKRPKEQQKLESIADMKAFVENYPQFKKMSGTVSKHVTVVGELSRLVSERNLLEVSEVEQELACQNDHSSALQNVKRLLQNPKVTEFDAVRLVMLYALHYERHSSNSLPGLIVDLRSKGVAEKYRKLVSAVVEYGGKRVRGSDLFSPKDAVAITKQFLKGLKGVENVYTQHQPFLHETLDHLIKGKLKENLYPYLGPSTLRDRPQDIIVFVIGGATYEEALTVYNLNRTTPGVRIVLGGTTIHNTKSFLEEVLASGLHSRSRESSQATSRSASRR</sequence>
<protein>
    <recommendedName>
        <fullName>Vacuolar protein sorting-associated protein 45</fullName>
        <shortName>rVps45</shortName>
    </recommendedName>
</protein>
<accession>O08700</accession>
<feature type="chain" id="PRO_0000206314" description="Vacuolar protein sorting-associated protein 45">
    <location>
        <begin position="1"/>
        <end position="570"/>
    </location>
</feature>
<feature type="modified residue" description="Phosphoserine" evidence="2">
    <location>
        <position position="307"/>
    </location>
</feature>
<feature type="modified residue" description="Phosphoserine" evidence="4">
    <location>
        <position position="441"/>
    </location>
</feature>
<name>VPS45_RAT</name>
<evidence type="ECO:0000250" key="1"/>
<evidence type="ECO:0000250" key="2">
    <source>
        <dbReference type="UniProtKB" id="Q9NRW7"/>
    </source>
</evidence>
<evidence type="ECO:0000305" key="3"/>
<evidence type="ECO:0007744" key="4">
    <source>
    </source>
</evidence>
<reference key="1">
    <citation type="journal article" date="1997" name="Biochim. Biophys. Acta">
        <title>Molecular cloning of a mammalian homologue of the yeast vesicular transport protein vps45.</title>
        <authorList>
            <person name="El-Husseini A.E.-D."/>
            <person name="Guthrie H."/>
            <person name="Snutch T.P."/>
            <person name="Vincent S.R."/>
        </authorList>
    </citation>
    <scope>NUCLEOTIDE SEQUENCE [MRNA]</scope>
    <source>
        <tissue>Brain</tissue>
    </source>
</reference>
<reference key="2">
    <citation type="journal article" date="2004" name="Genome Res.">
        <title>The status, quality, and expansion of the NIH full-length cDNA project: the Mammalian Gene Collection (MGC).</title>
        <authorList>
            <consortium name="The MGC Project Team"/>
        </authorList>
    </citation>
    <scope>NUCLEOTIDE SEQUENCE [LARGE SCALE MRNA]</scope>
    <source>
        <tissue>Heart</tissue>
    </source>
</reference>
<reference key="3">
    <citation type="journal article" date="2012" name="Nat. Commun.">
        <title>Quantitative maps of protein phosphorylation sites across 14 different rat organs and tissues.</title>
        <authorList>
            <person name="Lundby A."/>
            <person name="Secher A."/>
            <person name="Lage K."/>
            <person name="Nordsborg N.B."/>
            <person name="Dmytriyev A."/>
            <person name="Lundby C."/>
            <person name="Olsen J.V."/>
        </authorList>
    </citation>
    <scope>PHOSPHORYLATION [LARGE SCALE ANALYSIS] AT SER-441</scope>
    <scope>IDENTIFICATION BY MASS SPECTROMETRY [LARGE SCALE ANALYSIS]</scope>
</reference>